<proteinExistence type="inferred from homology"/>
<evidence type="ECO:0000255" key="1">
    <source>
        <dbReference type="HAMAP-Rule" id="MF_01261"/>
    </source>
</evidence>
<reference key="1">
    <citation type="journal article" date="2007" name="PLoS Genet.">
        <title>Meningococcal genetic variation mechanisms viewed through comparative analysis of serogroup C strain FAM18.</title>
        <authorList>
            <person name="Bentley S.D."/>
            <person name="Vernikos G.S."/>
            <person name="Snyder L.A.S."/>
            <person name="Churcher C."/>
            <person name="Arrowsmith C."/>
            <person name="Chillingworth T."/>
            <person name="Cronin A."/>
            <person name="Davis P.H."/>
            <person name="Holroyd N.E."/>
            <person name="Jagels K."/>
            <person name="Maddison M."/>
            <person name="Moule S."/>
            <person name="Rabbinowitsch E."/>
            <person name="Sharp S."/>
            <person name="Unwin L."/>
            <person name="Whitehead S."/>
            <person name="Quail M.A."/>
            <person name="Achtman M."/>
            <person name="Barrell B.G."/>
            <person name="Saunders N.J."/>
            <person name="Parkhill J."/>
        </authorList>
    </citation>
    <scope>NUCLEOTIDE SEQUENCE [LARGE SCALE GENOMIC DNA]</scope>
    <source>
        <strain>ATCC 700532 / DSM 15464 / FAM18</strain>
    </source>
</reference>
<comment type="function">
    <text evidence="1">Catalyzes the addition and repair of the essential 3'-terminal CCA sequence in tRNAs without using a nucleic acid template. Adds these three nucleotides in the order of C, C, and A to the tRNA nucleotide-73, using CTP and ATP as substrates and producing inorganic pyrophosphate. tRNA 3'-terminal CCA addition is required both for tRNA processing and repair. Also involved in tRNA surveillance by mediating tandem CCA addition to generate a CCACCA at the 3' terminus of unstable tRNAs. While stable tRNAs receive only 3'-terminal CCA, unstable tRNAs are marked with CCACCA and rapidly degraded.</text>
</comment>
<comment type="catalytic activity">
    <reaction evidence="1">
        <text>a tRNA precursor + 2 CTP + ATP = a tRNA with a 3' CCA end + 3 diphosphate</text>
        <dbReference type="Rhea" id="RHEA:14433"/>
        <dbReference type="Rhea" id="RHEA-COMP:10465"/>
        <dbReference type="Rhea" id="RHEA-COMP:10468"/>
        <dbReference type="ChEBI" id="CHEBI:30616"/>
        <dbReference type="ChEBI" id="CHEBI:33019"/>
        <dbReference type="ChEBI" id="CHEBI:37563"/>
        <dbReference type="ChEBI" id="CHEBI:74896"/>
        <dbReference type="ChEBI" id="CHEBI:83071"/>
        <dbReference type="EC" id="2.7.7.72"/>
    </reaction>
</comment>
<comment type="catalytic activity">
    <reaction evidence="1">
        <text>a tRNA with a 3' CCA end + 2 CTP + ATP = a tRNA with a 3' CCACCA end + 3 diphosphate</text>
        <dbReference type="Rhea" id="RHEA:76235"/>
        <dbReference type="Rhea" id="RHEA-COMP:10468"/>
        <dbReference type="Rhea" id="RHEA-COMP:18655"/>
        <dbReference type="ChEBI" id="CHEBI:30616"/>
        <dbReference type="ChEBI" id="CHEBI:33019"/>
        <dbReference type="ChEBI" id="CHEBI:37563"/>
        <dbReference type="ChEBI" id="CHEBI:83071"/>
        <dbReference type="ChEBI" id="CHEBI:195187"/>
    </reaction>
    <physiologicalReaction direction="left-to-right" evidence="1">
        <dbReference type="Rhea" id="RHEA:76236"/>
    </physiologicalReaction>
</comment>
<comment type="cofactor">
    <cofactor evidence="1">
        <name>Mg(2+)</name>
        <dbReference type="ChEBI" id="CHEBI:18420"/>
    </cofactor>
    <text evidence="1">Magnesium is required for nucleotidyltransferase activity.</text>
</comment>
<comment type="cofactor">
    <cofactor evidence="1">
        <name>Ni(2+)</name>
        <dbReference type="ChEBI" id="CHEBI:49786"/>
    </cofactor>
    <text evidence="1">Nickel for phosphatase activity.</text>
</comment>
<comment type="subunit">
    <text evidence="1">Monomer. Can also form homodimers and oligomers.</text>
</comment>
<comment type="domain">
    <text evidence="1">Comprises two domains: an N-terminal domain containing the nucleotidyltransferase activity and a C-terminal HD domain associated with both phosphodiesterase and phosphatase activities.</text>
</comment>
<comment type="miscellaneous">
    <text evidence="1">A single active site specifically recognizes both ATP and CTP and is responsible for their addition.</text>
</comment>
<comment type="similarity">
    <text evidence="1">Belongs to the tRNA nucleotidyltransferase/poly(A) polymerase family. Bacterial CCA-adding enzyme type 1 subfamily.</text>
</comment>
<accession>A1KU50</accession>
<protein>
    <recommendedName>
        <fullName evidence="1">Multifunctional CCA protein</fullName>
    </recommendedName>
    <domain>
        <recommendedName>
            <fullName evidence="1">CCA-adding enzyme</fullName>
            <ecNumber evidence="1">2.7.7.72</ecNumber>
        </recommendedName>
        <alternativeName>
            <fullName evidence="1">CCA tRNA nucleotidyltransferase</fullName>
        </alternativeName>
        <alternativeName>
            <fullName evidence="1">tRNA CCA-pyrophosphorylase</fullName>
        </alternativeName>
        <alternativeName>
            <fullName evidence="1">tRNA adenylyl-/cytidylyl-transferase</fullName>
        </alternativeName>
        <alternativeName>
            <fullName evidence="1">tRNA nucleotidyltransferase</fullName>
        </alternativeName>
        <alternativeName>
            <fullName evidence="1">tRNA-NT</fullName>
        </alternativeName>
    </domain>
    <domain>
        <recommendedName>
            <fullName evidence="1">2'-nucleotidase</fullName>
            <ecNumber evidence="1">3.1.3.-</ecNumber>
        </recommendedName>
    </domain>
    <domain>
        <recommendedName>
            <fullName evidence="1">2',3'-cyclic phosphodiesterase</fullName>
            <ecNumber evidence="1">3.1.4.-</ecNumber>
        </recommendedName>
    </domain>
    <domain>
        <recommendedName>
            <fullName evidence="1">Phosphatase</fullName>
            <ecNumber evidence="1">3.1.3.-</ecNumber>
        </recommendedName>
    </domain>
</protein>
<name>CCA_NEIMF</name>
<keyword id="KW-0067">ATP-binding</keyword>
<keyword id="KW-0378">Hydrolase</keyword>
<keyword id="KW-0460">Magnesium</keyword>
<keyword id="KW-0479">Metal-binding</keyword>
<keyword id="KW-0511">Multifunctional enzyme</keyword>
<keyword id="KW-0533">Nickel</keyword>
<keyword id="KW-0547">Nucleotide-binding</keyword>
<keyword id="KW-0548">Nucleotidyltransferase</keyword>
<keyword id="KW-0692">RNA repair</keyword>
<keyword id="KW-0694">RNA-binding</keyword>
<keyword id="KW-0808">Transferase</keyword>
<keyword id="KW-0819">tRNA processing</keyword>
<sequence length="417" mass="46997">MQTYLVGGAVRDYLLGLPVKDRDWVVVGADAQTMLAQGFQPVGKDFPVFLHPETHEEYTLARTERKTAKGYVGFSFHADKDVTLEQDLMRRDLTINAMAQDADGKIIDPFGGQRDLAAGILRHVSPAFAEDPVRILRTARFAARYRFEIAEETIKLMRQMVENGEADALVAERVWQEFAKGLMEKNPRKMIEVLRECGALKVLLPEVNALFGVPQRADYHPEIDSGIHTLMTLQRAADMGLSLPERYAALLHDLGKAKTPSDILPRHHGHDLAGVEPVREVNQRLRAPKHCAELAELVCRWHIIFHQVGQLKSQTILNVLKKTDAFRRPERFQTALNVCIADTQGRLNREHTPYPQRAHWFALLEAANQADSGKIAAECRAQGKAHLIAEQIDRARLAQIAPLQKTFRAAQDKTEKH</sequence>
<dbReference type="EC" id="2.7.7.72" evidence="1"/>
<dbReference type="EC" id="3.1.3.-" evidence="1"/>
<dbReference type="EC" id="3.1.4.-" evidence="1"/>
<dbReference type="EMBL" id="AM421808">
    <property type="protein sequence ID" value="CAM10391.1"/>
    <property type="molecule type" value="Genomic_DNA"/>
</dbReference>
<dbReference type="RefSeq" id="WP_002248057.1">
    <property type="nucleotide sequence ID" value="NC_008767.1"/>
</dbReference>
<dbReference type="SMR" id="A1KU50"/>
<dbReference type="KEGG" id="nmc:NMC1142"/>
<dbReference type="HOGENOM" id="CLU_015961_1_1_4"/>
<dbReference type="Proteomes" id="UP000002286">
    <property type="component" value="Chromosome"/>
</dbReference>
<dbReference type="GO" id="GO:0005524">
    <property type="term" value="F:ATP binding"/>
    <property type="evidence" value="ECO:0007669"/>
    <property type="project" value="UniProtKB-UniRule"/>
</dbReference>
<dbReference type="GO" id="GO:0004810">
    <property type="term" value="F:CCA tRNA nucleotidyltransferase activity"/>
    <property type="evidence" value="ECO:0007669"/>
    <property type="project" value="UniProtKB-UniRule"/>
</dbReference>
<dbReference type="GO" id="GO:0004112">
    <property type="term" value="F:cyclic-nucleotide phosphodiesterase activity"/>
    <property type="evidence" value="ECO:0007669"/>
    <property type="project" value="UniProtKB-UniRule"/>
</dbReference>
<dbReference type="GO" id="GO:0000287">
    <property type="term" value="F:magnesium ion binding"/>
    <property type="evidence" value="ECO:0007669"/>
    <property type="project" value="UniProtKB-UniRule"/>
</dbReference>
<dbReference type="GO" id="GO:0016791">
    <property type="term" value="F:phosphatase activity"/>
    <property type="evidence" value="ECO:0007669"/>
    <property type="project" value="UniProtKB-UniRule"/>
</dbReference>
<dbReference type="GO" id="GO:0000049">
    <property type="term" value="F:tRNA binding"/>
    <property type="evidence" value="ECO:0007669"/>
    <property type="project" value="UniProtKB-UniRule"/>
</dbReference>
<dbReference type="GO" id="GO:0042245">
    <property type="term" value="P:RNA repair"/>
    <property type="evidence" value="ECO:0007669"/>
    <property type="project" value="UniProtKB-KW"/>
</dbReference>
<dbReference type="GO" id="GO:0001680">
    <property type="term" value="P:tRNA 3'-terminal CCA addition"/>
    <property type="evidence" value="ECO:0007669"/>
    <property type="project" value="UniProtKB-UniRule"/>
</dbReference>
<dbReference type="CDD" id="cd00077">
    <property type="entry name" value="HDc"/>
    <property type="match status" value="1"/>
</dbReference>
<dbReference type="CDD" id="cd05398">
    <property type="entry name" value="NT_ClassII-CCAase"/>
    <property type="match status" value="1"/>
</dbReference>
<dbReference type="Gene3D" id="3.30.460.10">
    <property type="entry name" value="Beta Polymerase, domain 2"/>
    <property type="match status" value="1"/>
</dbReference>
<dbReference type="Gene3D" id="1.10.3090.10">
    <property type="entry name" value="cca-adding enzyme, domain 2"/>
    <property type="match status" value="1"/>
</dbReference>
<dbReference type="HAMAP" id="MF_01261">
    <property type="entry name" value="CCA_bact_type1"/>
    <property type="match status" value="1"/>
</dbReference>
<dbReference type="HAMAP" id="MF_01262">
    <property type="entry name" value="CCA_bact_type2"/>
    <property type="match status" value="1"/>
</dbReference>
<dbReference type="InterPro" id="IPR012006">
    <property type="entry name" value="CCA_bact"/>
</dbReference>
<dbReference type="InterPro" id="IPR003607">
    <property type="entry name" value="HD/PDEase_dom"/>
</dbReference>
<dbReference type="InterPro" id="IPR006674">
    <property type="entry name" value="HD_domain"/>
</dbReference>
<dbReference type="InterPro" id="IPR043519">
    <property type="entry name" value="NT_sf"/>
</dbReference>
<dbReference type="InterPro" id="IPR002646">
    <property type="entry name" value="PolA_pol_head_dom"/>
</dbReference>
<dbReference type="InterPro" id="IPR032828">
    <property type="entry name" value="PolyA_RNA-bd"/>
</dbReference>
<dbReference type="InterPro" id="IPR050124">
    <property type="entry name" value="tRNA_CCA-adding_enzyme"/>
</dbReference>
<dbReference type="NCBIfam" id="NF008137">
    <property type="entry name" value="PRK10885.1"/>
    <property type="match status" value="1"/>
</dbReference>
<dbReference type="PANTHER" id="PTHR47545">
    <property type="entry name" value="MULTIFUNCTIONAL CCA PROTEIN"/>
    <property type="match status" value="1"/>
</dbReference>
<dbReference type="PANTHER" id="PTHR47545:SF1">
    <property type="entry name" value="MULTIFUNCTIONAL CCA PROTEIN"/>
    <property type="match status" value="1"/>
</dbReference>
<dbReference type="Pfam" id="PF01966">
    <property type="entry name" value="HD"/>
    <property type="match status" value="1"/>
</dbReference>
<dbReference type="Pfam" id="PF01743">
    <property type="entry name" value="PolyA_pol"/>
    <property type="match status" value="1"/>
</dbReference>
<dbReference type="Pfam" id="PF12627">
    <property type="entry name" value="PolyA_pol_RNAbd"/>
    <property type="match status" value="1"/>
</dbReference>
<dbReference type="PIRSF" id="PIRSF000813">
    <property type="entry name" value="CCA_bact"/>
    <property type="match status" value="1"/>
</dbReference>
<dbReference type="SUPFAM" id="SSF81301">
    <property type="entry name" value="Nucleotidyltransferase"/>
    <property type="match status" value="1"/>
</dbReference>
<dbReference type="SUPFAM" id="SSF81891">
    <property type="entry name" value="Poly A polymerase C-terminal region-like"/>
    <property type="match status" value="1"/>
</dbReference>
<dbReference type="PROSITE" id="PS51831">
    <property type="entry name" value="HD"/>
    <property type="match status" value="1"/>
</dbReference>
<feature type="chain" id="PRO_1000054274" description="Multifunctional CCA protein">
    <location>
        <begin position="1"/>
        <end position="417"/>
    </location>
</feature>
<feature type="domain" description="HD" evidence="1">
    <location>
        <begin position="225"/>
        <end position="326"/>
    </location>
</feature>
<feature type="binding site" evidence="1">
    <location>
        <position position="8"/>
    </location>
    <ligand>
        <name>ATP</name>
        <dbReference type="ChEBI" id="CHEBI:30616"/>
    </ligand>
</feature>
<feature type="binding site" evidence="1">
    <location>
        <position position="8"/>
    </location>
    <ligand>
        <name>CTP</name>
        <dbReference type="ChEBI" id="CHEBI:37563"/>
    </ligand>
</feature>
<feature type="binding site" evidence="1">
    <location>
        <position position="11"/>
    </location>
    <ligand>
        <name>ATP</name>
        <dbReference type="ChEBI" id="CHEBI:30616"/>
    </ligand>
</feature>
<feature type="binding site" evidence="1">
    <location>
        <position position="11"/>
    </location>
    <ligand>
        <name>CTP</name>
        <dbReference type="ChEBI" id="CHEBI:37563"/>
    </ligand>
</feature>
<feature type="binding site" evidence="1">
    <location>
        <position position="21"/>
    </location>
    <ligand>
        <name>Mg(2+)</name>
        <dbReference type="ChEBI" id="CHEBI:18420"/>
    </ligand>
</feature>
<feature type="binding site" evidence="1">
    <location>
        <position position="23"/>
    </location>
    <ligand>
        <name>Mg(2+)</name>
        <dbReference type="ChEBI" id="CHEBI:18420"/>
    </ligand>
</feature>
<feature type="binding site" evidence="1">
    <location>
        <position position="91"/>
    </location>
    <ligand>
        <name>ATP</name>
        <dbReference type="ChEBI" id="CHEBI:30616"/>
    </ligand>
</feature>
<feature type="binding site" evidence="1">
    <location>
        <position position="91"/>
    </location>
    <ligand>
        <name>CTP</name>
        <dbReference type="ChEBI" id="CHEBI:37563"/>
    </ligand>
</feature>
<feature type="binding site" evidence="1">
    <location>
        <position position="137"/>
    </location>
    <ligand>
        <name>ATP</name>
        <dbReference type="ChEBI" id="CHEBI:30616"/>
    </ligand>
</feature>
<feature type="binding site" evidence="1">
    <location>
        <position position="137"/>
    </location>
    <ligand>
        <name>CTP</name>
        <dbReference type="ChEBI" id="CHEBI:37563"/>
    </ligand>
</feature>
<feature type="binding site" evidence="1">
    <location>
        <position position="140"/>
    </location>
    <ligand>
        <name>ATP</name>
        <dbReference type="ChEBI" id="CHEBI:30616"/>
    </ligand>
</feature>
<feature type="binding site" evidence="1">
    <location>
        <position position="140"/>
    </location>
    <ligand>
        <name>CTP</name>
        <dbReference type="ChEBI" id="CHEBI:37563"/>
    </ligand>
</feature>
<organism>
    <name type="scientific">Neisseria meningitidis serogroup C / serotype 2a (strain ATCC 700532 / DSM 15464 / FAM18)</name>
    <dbReference type="NCBI Taxonomy" id="272831"/>
    <lineage>
        <taxon>Bacteria</taxon>
        <taxon>Pseudomonadati</taxon>
        <taxon>Pseudomonadota</taxon>
        <taxon>Betaproteobacteria</taxon>
        <taxon>Neisseriales</taxon>
        <taxon>Neisseriaceae</taxon>
        <taxon>Neisseria</taxon>
    </lineage>
</organism>
<gene>
    <name evidence="1" type="primary">cca</name>
    <name type="ordered locus">NMC1142</name>
</gene>